<reference key="1">
    <citation type="journal article" date="2010" name="Genome Biol. Evol.">
        <title>Continuing evolution of Burkholderia mallei through genome reduction and large-scale rearrangements.</title>
        <authorList>
            <person name="Losada L."/>
            <person name="Ronning C.M."/>
            <person name="DeShazer D."/>
            <person name="Woods D."/>
            <person name="Fedorova N."/>
            <person name="Kim H.S."/>
            <person name="Shabalina S.A."/>
            <person name="Pearson T.R."/>
            <person name="Brinkac L."/>
            <person name="Tan P."/>
            <person name="Nandi T."/>
            <person name="Crabtree J."/>
            <person name="Badger J."/>
            <person name="Beckstrom-Sternberg S."/>
            <person name="Saqib M."/>
            <person name="Schutzer S.E."/>
            <person name="Keim P."/>
            <person name="Nierman W.C."/>
        </authorList>
    </citation>
    <scope>NUCLEOTIDE SEQUENCE [LARGE SCALE GENOMIC DNA]</scope>
    <source>
        <strain>1106a</strain>
    </source>
</reference>
<comment type="function">
    <text evidence="1">Channel that opens in response to stretch forces in the membrane lipid bilayer. May participate in the regulation of osmotic pressure changes within the cell.</text>
</comment>
<comment type="subunit">
    <text evidence="1">Homopentamer.</text>
</comment>
<comment type="subcellular location">
    <subcellularLocation>
        <location evidence="1">Cell inner membrane</location>
        <topology evidence="1">Multi-pass membrane protein</topology>
    </subcellularLocation>
</comment>
<comment type="similarity">
    <text evidence="1">Belongs to the MscL family.</text>
</comment>
<proteinExistence type="inferred from homology"/>
<dbReference type="EMBL" id="CP000572">
    <property type="protein sequence ID" value="ABN90350.1"/>
    <property type="molecule type" value="Genomic_DNA"/>
</dbReference>
<dbReference type="RefSeq" id="WP_004192898.1">
    <property type="nucleotide sequence ID" value="NC_009076.1"/>
</dbReference>
<dbReference type="SMR" id="A3NWF4"/>
<dbReference type="GeneID" id="93060637"/>
<dbReference type="KEGG" id="bpl:BURPS1106A_2415"/>
<dbReference type="HOGENOM" id="CLU_095787_0_1_4"/>
<dbReference type="Proteomes" id="UP000006738">
    <property type="component" value="Chromosome I"/>
</dbReference>
<dbReference type="GO" id="GO:0005886">
    <property type="term" value="C:plasma membrane"/>
    <property type="evidence" value="ECO:0007669"/>
    <property type="project" value="UniProtKB-SubCell"/>
</dbReference>
<dbReference type="GO" id="GO:0008381">
    <property type="term" value="F:mechanosensitive monoatomic ion channel activity"/>
    <property type="evidence" value="ECO:0007669"/>
    <property type="project" value="UniProtKB-UniRule"/>
</dbReference>
<dbReference type="Gene3D" id="1.10.1200.120">
    <property type="entry name" value="Large-conductance mechanosensitive channel, MscL, domain 1"/>
    <property type="match status" value="1"/>
</dbReference>
<dbReference type="HAMAP" id="MF_00115">
    <property type="entry name" value="MscL"/>
    <property type="match status" value="1"/>
</dbReference>
<dbReference type="InterPro" id="IPR019823">
    <property type="entry name" value="Mechanosensitive_channel_CS"/>
</dbReference>
<dbReference type="InterPro" id="IPR001185">
    <property type="entry name" value="MS_channel"/>
</dbReference>
<dbReference type="InterPro" id="IPR037673">
    <property type="entry name" value="MSC/AndL"/>
</dbReference>
<dbReference type="InterPro" id="IPR036019">
    <property type="entry name" value="MscL_channel"/>
</dbReference>
<dbReference type="NCBIfam" id="TIGR00220">
    <property type="entry name" value="mscL"/>
    <property type="match status" value="1"/>
</dbReference>
<dbReference type="NCBIfam" id="NF001843">
    <property type="entry name" value="PRK00567.1-4"/>
    <property type="match status" value="1"/>
</dbReference>
<dbReference type="NCBIfam" id="NF010557">
    <property type="entry name" value="PRK13952.1"/>
    <property type="match status" value="1"/>
</dbReference>
<dbReference type="PANTHER" id="PTHR30266:SF2">
    <property type="entry name" value="LARGE-CONDUCTANCE MECHANOSENSITIVE CHANNEL"/>
    <property type="match status" value="1"/>
</dbReference>
<dbReference type="PANTHER" id="PTHR30266">
    <property type="entry name" value="MECHANOSENSITIVE CHANNEL MSCL"/>
    <property type="match status" value="1"/>
</dbReference>
<dbReference type="Pfam" id="PF01741">
    <property type="entry name" value="MscL"/>
    <property type="match status" value="1"/>
</dbReference>
<dbReference type="PRINTS" id="PR01264">
    <property type="entry name" value="MECHCHANNEL"/>
</dbReference>
<dbReference type="SUPFAM" id="SSF81330">
    <property type="entry name" value="Gated mechanosensitive channel"/>
    <property type="match status" value="1"/>
</dbReference>
<dbReference type="PROSITE" id="PS01327">
    <property type="entry name" value="MSCL"/>
    <property type="match status" value="1"/>
</dbReference>
<evidence type="ECO:0000255" key="1">
    <source>
        <dbReference type="HAMAP-Rule" id="MF_00115"/>
    </source>
</evidence>
<sequence length="143" mass="15578">MSIIKEFKEFAVKGNVMDLAIGVIIGGAFSKIVDSVVKDLIMPVIGVLTGGLDFSNKFVLLGQIPASFKGNPESFKDLQAAGVATFGYGSFITVLINFIILAFIIFLMVKFINKLRKPEEAAPAATPEDVLLLREIRDSLKQR</sequence>
<protein>
    <recommendedName>
        <fullName evidence="1">Large-conductance mechanosensitive channel</fullName>
    </recommendedName>
</protein>
<name>MSCL_BURP0</name>
<keyword id="KW-0997">Cell inner membrane</keyword>
<keyword id="KW-1003">Cell membrane</keyword>
<keyword id="KW-0407">Ion channel</keyword>
<keyword id="KW-0406">Ion transport</keyword>
<keyword id="KW-0472">Membrane</keyword>
<keyword id="KW-0812">Transmembrane</keyword>
<keyword id="KW-1133">Transmembrane helix</keyword>
<keyword id="KW-0813">Transport</keyword>
<feature type="chain" id="PRO_1000015363" description="Large-conductance mechanosensitive channel">
    <location>
        <begin position="1"/>
        <end position="143"/>
    </location>
</feature>
<feature type="transmembrane region" description="Helical" evidence="1">
    <location>
        <begin position="10"/>
        <end position="30"/>
    </location>
</feature>
<feature type="transmembrane region" description="Helical" evidence="1">
    <location>
        <begin position="89"/>
        <end position="109"/>
    </location>
</feature>
<organism>
    <name type="scientific">Burkholderia pseudomallei (strain 1106a)</name>
    <dbReference type="NCBI Taxonomy" id="357348"/>
    <lineage>
        <taxon>Bacteria</taxon>
        <taxon>Pseudomonadati</taxon>
        <taxon>Pseudomonadota</taxon>
        <taxon>Betaproteobacteria</taxon>
        <taxon>Burkholderiales</taxon>
        <taxon>Burkholderiaceae</taxon>
        <taxon>Burkholderia</taxon>
        <taxon>pseudomallei group</taxon>
    </lineage>
</organism>
<gene>
    <name evidence="1" type="primary">mscL</name>
    <name type="ordered locus">BURPS1106A_2415</name>
</gene>
<accession>A3NWF4</accession>